<protein>
    <recommendedName>
        <fullName>Golgi SNAP receptor complex member 1</fullName>
    </recommendedName>
    <alternativeName>
        <fullName>Golgi SNARE protein 1</fullName>
    </alternativeName>
    <alternativeName>
        <fullName>Protein transport protein GOS1</fullName>
    </alternativeName>
</protein>
<proteinExistence type="evidence at protein level"/>
<evidence type="ECO:0000255" key="1"/>
<evidence type="ECO:0000269" key="2">
    <source>
    </source>
</evidence>
<evidence type="ECO:0000269" key="3">
    <source>
    </source>
</evidence>
<evidence type="ECO:0000269" key="4">
    <source>
    </source>
</evidence>
<evidence type="ECO:0000269" key="5">
    <source>
    </source>
</evidence>
<evidence type="ECO:0000269" key="6">
    <source>
    </source>
</evidence>
<evidence type="ECO:0000269" key="7">
    <source>
    </source>
</evidence>
<evidence type="ECO:0000269" key="8">
    <source>
    </source>
</evidence>
<evidence type="ECO:0000269" key="9">
    <source>
    </source>
</evidence>
<evidence type="ECO:0000269" key="10">
    <source>
    </source>
</evidence>
<evidence type="ECO:0000305" key="11"/>
<evidence type="ECO:0007744" key="12">
    <source>
    </source>
</evidence>
<evidence type="ECO:0007744" key="13">
    <source>
    </source>
</evidence>
<evidence type="ECO:0007744" key="14">
    <source>
    </source>
</evidence>
<reference key="1">
    <citation type="journal article" date="1994" name="Science">
        <title>Complete nucleotide sequence of Saccharomyces cerevisiae chromosome VIII.</title>
        <authorList>
            <person name="Johnston M."/>
            <person name="Andrews S."/>
            <person name="Brinkman R."/>
            <person name="Cooper J."/>
            <person name="Ding H."/>
            <person name="Dover J."/>
            <person name="Du Z."/>
            <person name="Favello A."/>
            <person name="Fulton L."/>
            <person name="Gattung S."/>
            <person name="Geisel C."/>
            <person name="Kirsten J."/>
            <person name="Kucaba T."/>
            <person name="Hillier L.W."/>
            <person name="Jier M."/>
            <person name="Johnston L."/>
            <person name="Langston Y."/>
            <person name="Latreille P."/>
            <person name="Louis E.J."/>
            <person name="Macri C."/>
            <person name="Mardis E."/>
            <person name="Menezes S."/>
            <person name="Mouser L."/>
            <person name="Nhan M."/>
            <person name="Rifkin L."/>
            <person name="Riles L."/>
            <person name="St Peter H."/>
            <person name="Trevaskis E."/>
            <person name="Vaughan K."/>
            <person name="Vignati D."/>
            <person name="Wilcox L."/>
            <person name="Wohldman P."/>
            <person name="Waterston R."/>
            <person name="Wilson R."/>
            <person name="Vaudin M."/>
        </authorList>
    </citation>
    <scope>NUCLEOTIDE SEQUENCE [LARGE SCALE GENOMIC DNA]</scope>
    <source>
        <strain>ATCC 204508 / S288c</strain>
    </source>
</reference>
<reference key="2">
    <citation type="journal article" date="2014" name="G3 (Bethesda)">
        <title>The reference genome sequence of Saccharomyces cerevisiae: Then and now.</title>
        <authorList>
            <person name="Engel S.R."/>
            <person name="Dietrich F.S."/>
            <person name="Fisk D.G."/>
            <person name="Binkley G."/>
            <person name="Balakrishnan R."/>
            <person name="Costanzo M.C."/>
            <person name="Dwight S.S."/>
            <person name="Hitz B.C."/>
            <person name="Karra K."/>
            <person name="Nash R.S."/>
            <person name="Weng S."/>
            <person name="Wong E.D."/>
            <person name="Lloyd P."/>
            <person name="Skrzypek M.S."/>
            <person name="Miyasato S.R."/>
            <person name="Simison M."/>
            <person name="Cherry J.M."/>
        </authorList>
    </citation>
    <scope>GENOME REANNOTATION</scope>
    <source>
        <strain>ATCC 204508 / S288c</strain>
    </source>
</reference>
<reference key="3">
    <citation type="journal article" date="1997" name="J. Biol. Chem.">
        <title>Ykt6p, a prenylated SNARE essential for endoplasmic reticulum-Golgi transport.</title>
        <authorList>
            <person name="McNew J.A."/>
            <person name="Soegaard M."/>
            <person name="Lampen N.M."/>
            <person name="Machida S."/>
            <person name="Ye R.R."/>
            <person name="Lacomis L."/>
            <person name="Tempst P."/>
            <person name="Rothman J.E."/>
            <person name="Soellner T.H."/>
        </authorList>
    </citation>
    <scope>INTERACTION WITH SED5</scope>
</reference>
<reference key="4">
    <citation type="journal article" date="1998" name="FEBS Lett.">
        <title>Gos1p, a Saccharomyces cerevisiae SNARE protein involved in Golgi transport.</title>
        <authorList>
            <person name="McNew J.A."/>
            <person name="Coe J.G.S."/>
            <person name="Sogaard M."/>
            <person name="Zemelman B.V."/>
            <person name="Wimmer C."/>
            <person name="Hong W."/>
            <person name="Soellner T.H."/>
        </authorList>
    </citation>
    <scope>FUNCTION</scope>
    <scope>INTERACTION WITH SED5</scope>
    <scope>DISRUPTION PHENOTYPE</scope>
    <scope>SUBCELLULAR LOCATION</scope>
</reference>
<reference key="5">
    <citation type="journal article" date="2000" name="J. Cell Sci.">
        <title>Yeast Golgi SNARE interactions are promiscuous.</title>
        <authorList>
            <person name="Tsui M.M."/>
            <person name="Banfield D.K."/>
        </authorList>
    </citation>
    <scope>INTERACTION WITH SFT1; SED5; YKT6; BET1; BOS1; SEC22; PEP12 AND SELF</scope>
</reference>
<reference key="6">
    <citation type="journal article" date="2001" name="Mol. Biol. Cell">
        <title>Ric1p and the Ypt6p GTPase function in a common pathway required for localization of trans-Golgi network membrane proteins.</title>
        <authorList>
            <person name="Bensen E.S."/>
            <person name="Yeung B.G."/>
            <person name="Payne G.S."/>
        </authorList>
    </citation>
    <scope>FUNCTION</scope>
    <scope>DISRUPTION PHENOTYPE</scope>
</reference>
<reference key="7">
    <citation type="journal article" date="2001" name="EMBO J.">
        <title>An effector of Ypt6p binds the SNARE Tlg1p and mediates selective fusion of vesicles with late Golgi membranes.</title>
        <authorList>
            <person name="Siniossoglou S."/>
            <person name="Pelham H.R.B."/>
        </authorList>
    </citation>
    <scope>DISRUPTION PHENOTYPE</scope>
</reference>
<reference key="8">
    <citation type="journal article" date="2002" name="Mol. Biol. Cell">
        <title>CASP, the alternatively spliced product of the gene encoding the CCAAT-displacement protein transcription factor, is a Golgi membrane protein related to giantin.</title>
        <authorList>
            <person name="Gillingham A.K."/>
            <person name="Pfeifer A.C."/>
            <person name="Munro S."/>
        </authorList>
    </citation>
    <scope>DISRUPTION PHENOTYPE</scope>
</reference>
<reference key="9">
    <citation type="journal article" date="2002" name="Proc. Natl. Acad. Sci. U.S.A.">
        <title>Distinct SNARE complexes mediating membrane fusion in Golgi transport based on combinatorial specificity.</title>
        <authorList>
            <person name="Parlati F."/>
            <person name="Varlamov O."/>
            <person name="Paz K."/>
            <person name="McNew J.A."/>
            <person name="Hurtado D."/>
            <person name="Sollner T.H."/>
            <person name="Rothman J.E."/>
        </authorList>
    </citation>
    <scope>FUNCTION</scope>
    <scope>INTERACTION WITH SED5; YKT6 AND SFT1</scope>
</reference>
<reference key="10">
    <citation type="journal article" date="2005" name="Mol. Cell. Biol.">
        <title>Immunoisolation of the yeast Golgi subcompartments and characterization of a novel membrane protein, Svp26, discovered in the Sed5-containing compartments.</title>
        <authorList>
            <person name="Inadome H."/>
            <person name="Noda Y."/>
            <person name="Adachi H."/>
            <person name="Yoda K."/>
        </authorList>
    </citation>
    <scope>SUBCELLULAR LOCATION</scope>
</reference>
<reference key="11">
    <citation type="journal article" date="2006" name="Nature">
        <title>Live imaging of yeast Golgi cisternal maturation.</title>
        <authorList>
            <person name="Matsuura-Tokita K."/>
            <person name="Takeuchi M."/>
            <person name="Ichihara A."/>
            <person name="Mikuriya K."/>
            <person name="Nakano A."/>
        </authorList>
    </citation>
    <scope>SUBCELLULAR LOCATION</scope>
</reference>
<reference key="12">
    <citation type="journal article" date="2007" name="J. Proteome Res.">
        <title>Large-scale phosphorylation analysis of alpha-factor-arrested Saccharomyces cerevisiae.</title>
        <authorList>
            <person name="Li X."/>
            <person name="Gerber S.A."/>
            <person name="Rudner A.D."/>
            <person name="Beausoleil S.A."/>
            <person name="Haas W."/>
            <person name="Villen J."/>
            <person name="Elias J.E."/>
            <person name="Gygi S.P."/>
        </authorList>
    </citation>
    <scope>PHOSPHORYLATION [LARGE SCALE ANALYSIS] AT SER-164</scope>
    <scope>IDENTIFICATION BY MASS SPECTROMETRY [LARGE SCALE ANALYSIS]</scope>
    <source>
        <strain>ADR376</strain>
    </source>
</reference>
<reference key="13">
    <citation type="journal article" date="2009" name="Science">
        <title>Global analysis of Cdk1 substrate phosphorylation sites provides insights into evolution.</title>
        <authorList>
            <person name="Holt L.J."/>
            <person name="Tuch B.B."/>
            <person name="Villen J."/>
            <person name="Johnson A.D."/>
            <person name="Gygi S.P."/>
            <person name="Morgan D.O."/>
        </authorList>
    </citation>
    <scope>PHOSPHORYLATION [LARGE SCALE ANALYSIS] AT SER-164</scope>
    <scope>IDENTIFICATION BY MASS SPECTROMETRY [LARGE SCALE ANALYSIS]</scope>
</reference>
<reference key="14">
    <citation type="journal article" date="2012" name="Proc. Natl. Acad. Sci. U.S.A.">
        <title>N-terminal acetylome analyses and functional insights of the N-terminal acetyltransferase NatB.</title>
        <authorList>
            <person name="Van Damme P."/>
            <person name="Lasa M."/>
            <person name="Polevoda B."/>
            <person name="Gazquez C."/>
            <person name="Elosegui-Artola A."/>
            <person name="Kim D.S."/>
            <person name="De Juan-Pardo E."/>
            <person name="Demeyer K."/>
            <person name="Hole K."/>
            <person name="Larrea E."/>
            <person name="Timmerman E."/>
            <person name="Prieto J."/>
            <person name="Arnesen T."/>
            <person name="Sherman F."/>
            <person name="Gevaert K."/>
            <person name="Aldabe R."/>
        </authorList>
    </citation>
    <scope>ACETYLATION [LARGE SCALE ANALYSIS] AT SER-2</scope>
    <scope>CLEAVAGE OF INITIATOR METHIONINE [LARGE SCALE ANALYSIS]</scope>
    <scope>IDENTIFICATION BY MASS SPECTROMETRY [LARGE SCALE ANALYSIS]</scope>
</reference>
<feature type="initiator methionine" description="Removed" evidence="14">
    <location>
        <position position="1"/>
    </location>
</feature>
<feature type="chain" id="PRO_0000212557" description="Golgi SNAP receptor complex member 1">
    <location>
        <begin position="2"/>
        <end position="223"/>
    </location>
</feature>
<feature type="topological domain" description="Cytoplasmic" evidence="1">
    <location>
        <begin position="2"/>
        <end position="204"/>
    </location>
</feature>
<feature type="transmembrane region" description="Helical; Anchor for type IV membrane protein" evidence="1">
    <location>
        <begin position="205"/>
        <end position="222"/>
    </location>
</feature>
<feature type="topological domain" description="Vesicular" evidence="1">
    <location>
        <position position="223"/>
    </location>
</feature>
<feature type="modified residue" description="N-acetylserine" evidence="14">
    <location>
        <position position="2"/>
    </location>
</feature>
<feature type="modified residue" description="Phosphoserine" evidence="12 13">
    <location>
        <position position="164"/>
    </location>
</feature>
<keyword id="KW-0007">Acetylation</keyword>
<keyword id="KW-0931">ER-Golgi transport</keyword>
<keyword id="KW-0333">Golgi apparatus</keyword>
<keyword id="KW-0472">Membrane</keyword>
<keyword id="KW-0597">Phosphoprotein</keyword>
<keyword id="KW-0653">Protein transport</keyword>
<keyword id="KW-1185">Reference proteome</keyword>
<keyword id="KW-0812">Transmembrane</keyword>
<keyword id="KW-1133">Transmembrane helix</keyword>
<keyword id="KW-0813">Transport</keyword>
<gene>
    <name type="primary">GOS1</name>
    <name type="ordered locus">YHL031C</name>
</gene>
<comment type="function">
    <text evidence="3 5 10">Involved in transport from the ER to the Golgi apparatus as well as in intra-Golgi transport. It belongs to a super-family of proteins called t-SNAREs or soluble NSF (N-ethylmaleimide-sensitive factor) attachment protein receptor. Rescues alpha-factor maturation defects.</text>
</comment>
<comment type="subunit">
    <text evidence="2 5 9 10">Component of several multiprotein Golgi SNARE complexes. Identified in a Golgi SNARE complex consisting of t-SNARES SED5, YKT6, and the v-SNARE SFT1. Interacts with BET1. Interacts with BOS1. Interacts with SEC22. Interacts with PEP12. Interacts with self.</text>
</comment>
<comment type="interaction">
    <interactant intactId="EBI-24365">
        <id>P38736</id>
    </interactant>
    <interactant intactId="EBI-16930">
        <id>Q01590</id>
        <label>SED5</label>
    </interactant>
    <organismsDiffer>false</organismsDiffer>
    <experiments>6</experiments>
</comment>
<comment type="subcellular location">
    <subcellularLocation>
        <location evidence="7 8 10">Golgi apparatus membrane</location>
        <topology evidence="7 8 10">Single-pass type IV membrane protein</topology>
    </subcellularLocation>
    <text>Punctate localization pattern. Localization affected by loss of SVP26, a membrane protein, and is shifted to the ER.</text>
</comment>
<comment type="disruption phenotype">
    <text evidence="3 4 6 10">Lack of late Golgi SNARE proteins, TLG1 and TLG2. Spores are temperature sensitive and fail to germinate at 37 degrees Celsius. 10 to 20% of cells possess a variety of aberrant structures, including fragmentation of the vacuole, a common occurrence in secretory defects, and substantial accumulation of membranes in some cells. These structures are considered to be abnormal Golgi remnants. Endoplasmic reticulum (ER) retention defective, erd phenotype, which is characterized by hypersecretion of ER-resident proteins. This results from a defect in retrograde directed vesicles. Severely compromised viability when another Golgi protein, COY1P is overexpressed. Incomplete maturation of alpha-factor via defective localization of KEX2.</text>
</comment>
<comment type="similarity">
    <text evidence="11">Belongs to the GOSR1 family.</text>
</comment>
<comment type="caution">
    <text evidence="11">Formerly referred to as a v-SNARE.</text>
</comment>
<sequence>MSSQPSFVTIRGKAISLETQTESLLSKYSTFAQTTSSEQTGQEKKIDKQLEGILGQRQDVIDSLTQICDSNPAISASKLSQLHRHKEILQDHWKSFRNIRSSIQQERNRLNLLFSVKNDIANSTTDAPAPIGDADEYIQNETRRIDQSNNVVDRLISQAWETRSQFHSQSNVLNTANNKVLQTLQRIPGVNQLIMKINTRRKKNAFVLATITTLCILFLFFTW</sequence>
<organism>
    <name type="scientific">Saccharomyces cerevisiae (strain ATCC 204508 / S288c)</name>
    <name type="common">Baker's yeast</name>
    <dbReference type="NCBI Taxonomy" id="559292"/>
    <lineage>
        <taxon>Eukaryota</taxon>
        <taxon>Fungi</taxon>
        <taxon>Dikarya</taxon>
        <taxon>Ascomycota</taxon>
        <taxon>Saccharomycotina</taxon>
        <taxon>Saccharomycetes</taxon>
        <taxon>Saccharomycetales</taxon>
        <taxon>Saccharomycetaceae</taxon>
        <taxon>Saccharomyces</taxon>
    </lineage>
</organism>
<name>GOSR1_YEAST</name>
<dbReference type="EMBL" id="U11583">
    <property type="protein sequence ID" value="AAB65043.1"/>
    <property type="molecule type" value="Genomic_DNA"/>
</dbReference>
<dbReference type="EMBL" id="BK006934">
    <property type="protein sequence ID" value="DAA06654.1"/>
    <property type="molecule type" value="Genomic_DNA"/>
</dbReference>
<dbReference type="PIR" id="S48937">
    <property type="entry name" value="S48937"/>
</dbReference>
<dbReference type="RefSeq" id="NP_011832.1">
    <property type="nucleotide sequence ID" value="NM_001179111.1"/>
</dbReference>
<dbReference type="SMR" id="P38736"/>
<dbReference type="BioGRID" id="36391">
    <property type="interactions" value="551"/>
</dbReference>
<dbReference type="ComplexPortal" id="CPX-1855">
    <property type="entry name" value="Golgi SNARE complex SED5-GOS1-SFT1-YKT6"/>
</dbReference>
<dbReference type="DIP" id="DIP-2490N"/>
<dbReference type="FunCoup" id="P38736">
    <property type="interactions" value="1003"/>
</dbReference>
<dbReference type="IntAct" id="P38736">
    <property type="interactions" value="28"/>
</dbReference>
<dbReference type="MINT" id="P38736"/>
<dbReference type="STRING" id="4932.YHL031C"/>
<dbReference type="TCDB" id="8.A.216.1.7">
    <property type="family name" value="the golgi snap receptor complex, member 1 (gosr1) family"/>
</dbReference>
<dbReference type="iPTMnet" id="P38736"/>
<dbReference type="PaxDb" id="4932-YHL031C"/>
<dbReference type="PeptideAtlas" id="P38736"/>
<dbReference type="EnsemblFungi" id="YHL031C_mRNA">
    <property type="protein sequence ID" value="YHL031C"/>
    <property type="gene ID" value="YHL031C"/>
</dbReference>
<dbReference type="GeneID" id="856354"/>
<dbReference type="KEGG" id="sce:YHL031C"/>
<dbReference type="AGR" id="SGD:S000001023"/>
<dbReference type="SGD" id="S000001023">
    <property type="gene designation" value="GOS1"/>
</dbReference>
<dbReference type="VEuPathDB" id="FungiDB:YHL031C"/>
<dbReference type="eggNOG" id="KOG3208">
    <property type="taxonomic scope" value="Eukaryota"/>
</dbReference>
<dbReference type="GeneTree" id="ENSGT00390000008688"/>
<dbReference type="HOGENOM" id="CLU_078034_1_1_1"/>
<dbReference type="InParanoid" id="P38736"/>
<dbReference type="OMA" id="QAYAVND"/>
<dbReference type="OrthoDB" id="422156at2759"/>
<dbReference type="BioCyc" id="YEAST:G3O-31051-MONOMER"/>
<dbReference type="Reactome" id="R-SCE-6807878">
    <property type="pathway name" value="COPI-mediated anterograde transport"/>
</dbReference>
<dbReference type="Reactome" id="R-SCE-6811438">
    <property type="pathway name" value="Intra-Golgi traffic"/>
</dbReference>
<dbReference type="BioGRID-ORCS" id="856354">
    <property type="hits" value="6 hits in 10 CRISPR screens"/>
</dbReference>
<dbReference type="PRO" id="PR:P38736"/>
<dbReference type="Proteomes" id="UP000002311">
    <property type="component" value="Chromosome VIII"/>
</dbReference>
<dbReference type="RNAct" id="P38736">
    <property type="molecule type" value="protein"/>
</dbReference>
<dbReference type="GO" id="GO:0005801">
    <property type="term" value="C:cis-Golgi network"/>
    <property type="evidence" value="ECO:0007669"/>
    <property type="project" value="InterPro"/>
</dbReference>
<dbReference type="GO" id="GO:0005789">
    <property type="term" value="C:endoplasmic reticulum membrane"/>
    <property type="evidence" value="ECO:0000303"/>
    <property type="project" value="ComplexPortal"/>
</dbReference>
<dbReference type="GO" id="GO:1990674">
    <property type="term" value="C:Golgi cis cisterna membrane"/>
    <property type="evidence" value="ECO:0000303"/>
    <property type="project" value="ComplexPortal"/>
</dbReference>
<dbReference type="GO" id="GO:0005797">
    <property type="term" value="C:Golgi medial cisterna"/>
    <property type="evidence" value="ECO:0000314"/>
    <property type="project" value="SGD"/>
</dbReference>
<dbReference type="GO" id="GO:0000139">
    <property type="term" value="C:Golgi membrane"/>
    <property type="evidence" value="ECO:0000318"/>
    <property type="project" value="GO_Central"/>
</dbReference>
<dbReference type="GO" id="GO:0031201">
    <property type="term" value="C:SNARE complex"/>
    <property type="evidence" value="ECO:0000314"/>
    <property type="project" value="SGD"/>
</dbReference>
<dbReference type="GO" id="GO:0005484">
    <property type="term" value="F:SNAP receptor activity"/>
    <property type="evidence" value="ECO:0000314"/>
    <property type="project" value="SGD"/>
</dbReference>
<dbReference type="GO" id="GO:0006888">
    <property type="term" value="P:endoplasmic reticulum to Golgi vesicle-mediated transport"/>
    <property type="evidence" value="ECO:0000314"/>
    <property type="project" value="ComplexPortal"/>
</dbReference>
<dbReference type="GO" id="GO:0048193">
    <property type="term" value="P:Golgi vesicle transport"/>
    <property type="evidence" value="ECO:0000315"/>
    <property type="project" value="SGD"/>
</dbReference>
<dbReference type="GO" id="GO:0048219">
    <property type="term" value="P:inter-Golgi cisterna vesicle-mediated transport"/>
    <property type="evidence" value="ECO:0000318"/>
    <property type="project" value="GO_Central"/>
</dbReference>
<dbReference type="GO" id="GO:0006886">
    <property type="term" value="P:intracellular protein transport"/>
    <property type="evidence" value="ECO:0000314"/>
    <property type="project" value="ComplexPortal"/>
</dbReference>
<dbReference type="GO" id="GO:0006906">
    <property type="term" value="P:vesicle fusion"/>
    <property type="evidence" value="ECO:0000314"/>
    <property type="project" value="ComplexPortal"/>
</dbReference>
<dbReference type="GO" id="GO:0048280">
    <property type="term" value="P:vesicle fusion with Golgi apparatus"/>
    <property type="evidence" value="ECO:0000303"/>
    <property type="project" value="ComplexPortal"/>
</dbReference>
<dbReference type="InterPro" id="IPR023601">
    <property type="entry name" value="Golgi_SNAP_su1"/>
</dbReference>
<dbReference type="PANTHER" id="PTHR21094:SF2">
    <property type="entry name" value="GOLGI SNAP RECEPTOR COMPLEX MEMBER 1"/>
    <property type="match status" value="1"/>
</dbReference>
<dbReference type="PANTHER" id="PTHR21094">
    <property type="entry name" value="GOS-28 SNARE- RELATED"/>
    <property type="match status" value="1"/>
</dbReference>
<dbReference type="Pfam" id="PF12352">
    <property type="entry name" value="V-SNARE_C"/>
    <property type="match status" value="1"/>
</dbReference>
<dbReference type="PIRSF" id="PIRSF027109">
    <property type="entry name" value="Golgi_SNARE"/>
    <property type="match status" value="1"/>
</dbReference>
<accession>P38736</accession>
<accession>D3DKT7</accession>